<proteinExistence type="evidence at transcript level"/>
<sequence>MDLEASLLPTGPNASNTSDGPDNLTSAGSPPRTGSISYINIIMPSVFGTICLLGIIGNSTVIFAVVKKSKLHWCNNVPDIFIINLSVVDLLFLLGMPFMIHQLMGNGVWHFGETMCTLITAMDANSQFTSTYILTAMAIDRYLATVHPISSTKFRKPSVATLVICLLWALSFISITPVWLYARLIPFPGGAVGCGIRLPNPDTDLYWFTLYQFFLAFALPFVVITAAYVRILQRMTSSVAPASQRSIRLRTKRVTRTAIAICLVFFVCWAPYYVLQLTQLSISRPTLTFVYLYNAAISLGYANSCLNPFVYIVLCETFRKRLVLSVKPAAQGQLRAVSNAQTADEERTESKGT</sequence>
<gene>
    <name evidence="1" type="primary">MCHR1</name>
    <name type="synonym">GPR24</name>
</gene>
<evidence type="ECO:0000250" key="1">
    <source>
        <dbReference type="UniProtKB" id="Q99705"/>
    </source>
</evidence>
<evidence type="ECO:0000255" key="2"/>
<evidence type="ECO:0000255" key="3">
    <source>
        <dbReference type="PROSITE-ProRule" id="PRU00521"/>
    </source>
</evidence>
<evidence type="ECO:0000256" key="4">
    <source>
        <dbReference type="SAM" id="MobiDB-lite"/>
    </source>
</evidence>
<evidence type="ECO:0000305" key="5"/>
<name>MCHR1_PANTR</name>
<dbReference type="EMBL" id="AY714489">
    <property type="protein sequence ID" value="AAV98096.1"/>
    <property type="status" value="ALT_INIT"/>
    <property type="molecule type" value="mRNA"/>
</dbReference>
<dbReference type="RefSeq" id="NP_001012440.1">
    <property type="nucleotide sequence ID" value="NM_001012438.1"/>
</dbReference>
<dbReference type="SMR" id="Q5IJ49"/>
<dbReference type="FunCoup" id="Q5IJ49">
    <property type="interactions" value="601"/>
</dbReference>
<dbReference type="STRING" id="9598.ENSPTRP00000024831"/>
<dbReference type="GlyCosmos" id="Q5IJ49">
    <property type="glycosylation" value="3 sites, No reported glycans"/>
</dbReference>
<dbReference type="PaxDb" id="9598-ENSPTRP00000024831"/>
<dbReference type="GeneID" id="470220"/>
<dbReference type="KEGG" id="ptr:470220"/>
<dbReference type="CTD" id="2847"/>
<dbReference type="eggNOG" id="KOG3656">
    <property type="taxonomic scope" value="Eukaryota"/>
</dbReference>
<dbReference type="InParanoid" id="Q5IJ49"/>
<dbReference type="OrthoDB" id="5322at9604"/>
<dbReference type="Proteomes" id="UP000002277">
    <property type="component" value="Unplaced"/>
</dbReference>
<dbReference type="GO" id="GO:0043005">
    <property type="term" value="C:neuron projection"/>
    <property type="evidence" value="ECO:0000318"/>
    <property type="project" value="GO_Central"/>
</dbReference>
<dbReference type="GO" id="GO:0005886">
    <property type="term" value="C:plasma membrane"/>
    <property type="evidence" value="ECO:0000318"/>
    <property type="project" value="GO_Central"/>
</dbReference>
<dbReference type="GO" id="GO:0004930">
    <property type="term" value="F:G protein-coupled receptor activity"/>
    <property type="evidence" value="ECO:0000318"/>
    <property type="project" value="GO_Central"/>
</dbReference>
<dbReference type="GO" id="GO:0030273">
    <property type="term" value="F:melanin-concentrating hormone receptor activity"/>
    <property type="evidence" value="ECO:0007669"/>
    <property type="project" value="InterPro"/>
</dbReference>
<dbReference type="GO" id="GO:0042923">
    <property type="term" value="F:neuropeptide binding"/>
    <property type="evidence" value="ECO:0000318"/>
    <property type="project" value="GO_Central"/>
</dbReference>
<dbReference type="GO" id="GO:0007218">
    <property type="term" value="P:neuropeptide signaling pathway"/>
    <property type="evidence" value="ECO:0000318"/>
    <property type="project" value="GO_Central"/>
</dbReference>
<dbReference type="CDD" id="cd15338">
    <property type="entry name" value="7tmA_MCHR1"/>
    <property type="match status" value="1"/>
</dbReference>
<dbReference type="FunFam" id="1.20.1070.10:FF:000115">
    <property type="entry name" value="Melanin-concentrating hormone receptor 1"/>
    <property type="match status" value="1"/>
</dbReference>
<dbReference type="Gene3D" id="1.20.1070.10">
    <property type="entry name" value="Rhodopsin 7-helix transmembrane proteins"/>
    <property type="match status" value="1"/>
</dbReference>
<dbReference type="InterPro" id="IPR000276">
    <property type="entry name" value="GPCR_Rhodpsn"/>
</dbReference>
<dbReference type="InterPro" id="IPR017452">
    <property type="entry name" value="GPCR_Rhodpsn_7TM"/>
</dbReference>
<dbReference type="InterPro" id="IPR008361">
    <property type="entry name" value="MCH_rcpt"/>
</dbReference>
<dbReference type="InterPro" id="IPR004047">
    <property type="entry name" value="MCHR1"/>
</dbReference>
<dbReference type="PANTHER" id="PTHR24229:SF91">
    <property type="entry name" value="MELANIN-CONCENTRATING HORMONE RECEPTOR 1"/>
    <property type="match status" value="1"/>
</dbReference>
<dbReference type="PANTHER" id="PTHR24229">
    <property type="entry name" value="NEUROPEPTIDES RECEPTOR"/>
    <property type="match status" value="1"/>
</dbReference>
<dbReference type="Pfam" id="PF00001">
    <property type="entry name" value="7tm_1"/>
    <property type="match status" value="1"/>
</dbReference>
<dbReference type="PRINTS" id="PR00237">
    <property type="entry name" value="GPCRRHODOPSN"/>
</dbReference>
<dbReference type="PRINTS" id="PR01507">
    <property type="entry name" value="MCH1RECEPTOR"/>
</dbReference>
<dbReference type="PRINTS" id="PR01783">
    <property type="entry name" value="MCHRECEPTOR"/>
</dbReference>
<dbReference type="SUPFAM" id="SSF81321">
    <property type="entry name" value="Family A G protein-coupled receptor-like"/>
    <property type="match status" value="1"/>
</dbReference>
<dbReference type="PROSITE" id="PS50262">
    <property type="entry name" value="G_PROTEIN_RECEP_F1_2"/>
    <property type="match status" value="1"/>
</dbReference>
<accession>Q5IJ49</accession>
<keyword id="KW-1003">Cell membrane</keyword>
<keyword id="KW-1015">Disulfide bond</keyword>
<keyword id="KW-0297">G-protein coupled receptor</keyword>
<keyword id="KW-0325">Glycoprotein</keyword>
<keyword id="KW-0472">Membrane</keyword>
<keyword id="KW-0675">Receptor</keyword>
<keyword id="KW-1185">Reference proteome</keyword>
<keyword id="KW-0807">Transducer</keyword>
<keyword id="KW-0812">Transmembrane</keyword>
<keyword id="KW-1133">Transmembrane helix</keyword>
<protein>
    <recommendedName>
        <fullName evidence="1">Melanin-concentrating hormone receptor 1</fullName>
        <shortName>MCH receptor 1</shortName>
        <shortName>MCH-R1</shortName>
        <shortName>MCHR-1</shortName>
    </recommendedName>
    <alternativeName>
        <fullName>G-protein coupled receptor 24</fullName>
    </alternativeName>
    <alternativeName>
        <fullName>MCH-1R</fullName>
        <shortName>MCH1R</shortName>
        <shortName>MCHR</shortName>
    </alternativeName>
</protein>
<reference key="1">
    <citation type="submission" date="2004-08" db="EMBL/GenBank/DDBJ databases">
        <title>Cloning of Pan troglodytes G-protein coupled receptor 24 (GPR24) mRNA.</title>
        <authorList>
            <person name="Reichwald K."/>
            <person name="Petz U."/>
            <person name="Huse K."/>
            <person name="Enard W."/>
            <person name="Platzer M."/>
        </authorList>
    </citation>
    <scope>NUCLEOTIDE SEQUENCE [MRNA]</scope>
    <source>
        <tissue>Liver</tissue>
    </source>
</reference>
<organism>
    <name type="scientific">Pan troglodytes</name>
    <name type="common">Chimpanzee</name>
    <dbReference type="NCBI Taxonomy" id="9598"/>
    <lineage>
        <taxon>Eukaryota</taxon>
        <taxon>Metazoa</taxon>
        <taxon>Chordata</taxon>
        <taxon>Craniata</taxon>
        <taxon>Vertebrata</taxon>
        <taxon>Euteleostomi</taxon>
        <taxon>Mammalia</taxon>
        <taxon>Eutheria</taxon>
        <taxon>Euarchontoglires</taxon>
        <taxon>Primates</taxon>
        <taxon>Haplorrhini</taxon>
        <taxon>Catarrhini</taxon>
        <taxon>Hominidae</taxon>
        <taxon>Pan</taxon>
    </lineage>
</organism>
<feature type="chain" id="PRO_0000069737" description="Melanin-concentrating hormone receptor 1">
    <location>
        <begin position="1"/>
        <end position="353"/>
    </location>
</feature>
<feature type="topological domain" description="Extracellular" evidence="2">
    <location>
        <begin position="1"/>
        <end position="44"/>
    </location>
</feature>
<feature type="transmembrane region" description="Helical; Name=1" evidence="2">
    <location>
        <begin position="45"/>
        <end position="67"/>
    </location>
</feature>
<feature type="topological domain" description="Cytoplasmic" evidence="2">
    <location>
        <begin position="68"/>
        <end position="79"/>
    </location>
</feature>
<feature type="transmembrane region" description="Helical; Name=2" evidence="2">
    <location>
        <begin position="80"/>
        <end position="102"/>
    </location>
</feature>
<feature type="topological domain" description="Extracellular" evidence="2">
    <location>
        <begin position="103"/>
        <end position="116"/>
    </location>
</feature>
<feature type="transmembrane region" description="Helical; Name=3" evidence="2">
    <location>
        <begin position="117"/>
        <end position="139"/>
    </location>
</feature>
<feature type="topological domain" description="Cytoplasmic" evidence="2">
    <location>
        <begin position="140"/>
        <end position="158"/>
    </location>
</feature>
<feature type="transmembrane region" description="Helical; Name=4" evidence="2">
    <location>
        <begin position="159"/>
        <end position="181"/>
    </location>
</feature>
<feature type="topological domain" description="Extracellular" evidence="2">
    <location>
        <begin position="182"/>
        <end position="209"/>
    </location>
</feature>
<feature type="transmembrane region" description="Helical; Name=5" evidence="2">
    <location>
        <begin position="210"/>
        <end position="232"/>
    </location>
</feature>
<feature type="topological domain" description="Cytoplasmic" evidence="2">
    <location>
        <begin position="233"/>
        <end position="252"/>
    </location>
</feature>
<feature type="transmembrane region" description="Helical; Name=6" evidence="2">
    <location>
        <begin position="253"/>
        <end position="275"/>
    </location>
</feature>
<feature type="topological domain" description="Extracellular" evidence="2">
    <location>
        <begin position="276"/>
        <end position="289"/>
    </location>
</feature>
<feature type="transmembrane region" description="Helical; Name=7" evidence="2">
    <location>
        <begin position="290"/>
        <end position="312"/>
    </location>
</feature>
<feature type="topological domain" description="Cytoplasmic" evidence="2">
    <location>
        <begin position="313"/>
        <end position="353"/>
    </location>
</feature>
<feature type="region of interest" description="Disordered" evidence="4">
    <location>
        <begin position="1"/>
        <end position="29"/>
    </location>
</feature>
<feature type="compositionally biased region" description="Polar residues" evidence="4">
    <location>
        <begin position="12"/>
        <end position="29"/>
    </location>
</feature>
<feature type="glycosylation site" description="N-linked (GlcNAc...) asparagine" evidence="2">
    <location>
        <position position="13"/>
    </location>
</feature>
<feature type="glycosylation site" description="N-linked (GlcNAc...) asparagine" evidence="2">
    <location>
        <position position="16"/>
    </location>
</feature>
<feature type="glycosylation site" description="N-linked (GlcNAc...) asparagine" evidence="2">
    <location>
        <position position="23"/>
    </location>
</feature>
<feature type="disulfide bond" evidence="3">
    <location>
        <begin position="116"/>
        <end position="194"/>
    </location>
</feature>
<comment type="function">
    <text evidence="1">Receptor for melanin-concentrating hormone, coupled to both G proteins that inhibit adenylyl cyclase and G proteins that activate phosphoinositide hydrolysis.</text>
</comment>
<comment type="subunit">
    <text evidence="1">Interacts with NCDN.</text>
</comment>
<comment type="subcellular location">
    <subcellularLocation>
        <location evidence="1">Cell membrane</location>
        <topology evidence="2">Multi-pass membrane protein</topology>
    </subcellularLocation>
</comment>
<comment type="similarity">
    <text evidence="3">Belongs to the G-protein coupled receptor 1 family.</text>
</comment>
<comment type="sequence caution" evidence="5">
    <conflict type="erroneous initiation">
        <sequence resource="EMBL-CDS" id="AAV98096"/>
    </conflict>
    <text>Extended N-terminus.</text>
</comment>